<reference key="1">
    <citation type="journal article" date="2004" name="Proc. Natl. Acad. Sci. U.S.A.">
        <title>Genomic plasticity of the causative agent of melioidosis, Burkholderia pseudomallei.</title>
        <authorList>
            <person name="Holden M.T.G."/>
            <person name="Titball R.W."/>
            <person name="Peacock S.J."/>
            <person name="Cerdeno-Tarraga A.-M."/>
            <person name="Atkins T."/>
            <person name="Crossman L.C."/>
            <person name="Pitt T."/>
            <person name="Churcher C."/>
            <person name="Mungall K.L."/>
            <person name="Bentley S.D."/>
            <person name="Sebaihia M."/>
            <person name="Thomson N.R."/>
            <person name="Bason N."/>
            <person name="Beacham I.R."/>
            <person name="Brooks K."/>
            <person name="Brown K.A."/>
            <person name="Brown N.F."/>
            <person name="Challis G.L."/>
            <person name="Cherevach I."/>
            <person name="Chillingworth T."/>
            <person name="Cronin A."/>
            <person name="Crossett B."/>
            <person name="Davis P."/>
            <person name="DeShazer D."/>
            <person name="Feltwell T."/>
            <person name="Fraser A."/>
            <person name="Hance Z."/>
            <person name="Hauser H."/>
            <person name="Holroyd S."/>
            <person name="Jagels K."/>
            <person name="Keith K.E."/>
            <person name="Maddison M."/>
            <person name="Moule S."/>
            <person name="Price C."/>
            <person name="Quail M.A."/>
            <person name="Rabbinowitsch E."/>
            <person name="Rutherford K."/>
            <person name="Sanders M."/>
            <person name="Simmonds M."/>
            <person name="Songsivilai S."/>
            <person name="Stevens K."/>
            <person name="Tumapa S."/>
            <person name="Vesaratchavest M."/>
            <person name="Whitehead S."/>
            <person name="Yeats C."/>
            <person name="Barrell B.G."/>
            <person name="Oyston P.C.F."/>
            <person name="Parkhill J."/>
        </authorList>
    </citation>
    <scope>NUCLEOTIDE SEQUENCE [LARGE SCALE GENOMIC DNA]</scope>
    <source>
        <strain>K96243</strain>
    </source>
</reference>
<gene>
    <name evidence="1" type="primary">rplL</name>
    <name type="ordered locus">BPSL3222</name>
</gene>
<organism>
    <name type="scientific">Burkholderia pseudomallei (strain K96243)</name>
    <dbReference type="NCBI Taxonomy" id="272560"/>
    <lineage>
        <taxon>Bacteria</taxon>
        <taxon>Pseudomonadati</taxon>
        <taxon>Pseudomonadota</taxon>
        <taxon>Betaproteobacteria</taxon>
        <taxon>Burkholderiales</taxon>
        <taxon>Burkholderiaceae</taxon>
        <taxon>Burkholderia</taxon>
        <taxon>pseudomallei group</taxon>
    </lineage>
</organism>
<dbReference type="EMBL" id="BX571965">
    <property type="protein sequence ID" value="CAH37233.1"/>
    <property type="status" value="ALT_INIT"/>
    <property type="molecule type" value="Genomic_DNA"/>
</dbReference>
<dbReference type="RefSeq" id="WP_004198366.1">
    <property type="nucleotide sequence ID" value="NZ_CP009538.1"/>
</dbReference>
<dbReference type="RefSeq" id="YP_109816.1">
    <property type="nucleotide sequence ID" value="NC_006350.1"/>
</dbReference>
<dbReference type="SMR" id="Q63Q02"/>
<dbReference type="STRING" id="272560.BPSL3222"/>
<dbReference type="GeneID" id="93061842"/>
<dbReference type="KEGG" id="bps:BPSL3222"/>
<dbReference type="PATRIC" id="fig|272560.51.peg.2016"/>
<dbReference type="eggNOG" id="COG0222">
    <property type="taxonomic scope" value="Bacteria"/>
</dbReference>
<dbReference type="Proteomes" id="UP000000605">
    <property type="component" value="Chromosome 1"/>
</dbReference>
<dbReference type="GO" id="GO:0022625">
    <property type="term" value="C:cytosolic large ribosomal subunit"/>
    <property type="evidence" value="ECO:0007669"/>
    <property type="project" value="TreeGrafter"/>
</dbReference>
<dbReference type="GO" id="GO:0003729">
    <property type="term" value="F:mRNA binding"/>
    <property type="evidence" value="ECO:0007669"/>
    <property type="project" value="TreeGrafter"/>
</dbReference>
<dbReference type="GO" id="GO:0003735">
    <property type="term" value="F:structural constituent of ribosome"/>
    <property type="evidence" value="ECO:0007669"/>
    <property type="project" value="InterPro"/>
</dbReference>
<dbReference type="GO" id="GO:0006412">
    <property type="term" value="P:translation"/>
    <property type="evidence" value="ECO:0007669"/>
    <property type="project" value="UniProtKB-UniRule"/>
</dbReference>
<dbReference type="CDD" id="cd00387">
    <property type="entry name" value="Ribosomal_L7_L12"/>
    <property type="match status" value="1"/>
</dbReference>
<dbReference type="FunFam" id="3.30.1390.10:FF:000001">
    <property type="entry name" value="50S ribosomal protein L7/L12"/>
    <property type="match status" value="1"/>
</dbReference>
<dbReference type="Gene3D" id="3.30.1390.10">
    <property type="match status" value="1"/>
</dbReference>
<dbReference type="Gene3D" id="1.20.5.710">
    <property type="entry name" value="Single helix bin"/>
    <property type="match status" value="1"/>
</dbReference>
<dbReference type="HAMAP" id="MF_00368">
    <property type="entry name" value="Ribosomal_bL12"/>
    <property type="match status" value="1"/>
</dbReference>
<dbReference type="InterPro" id="IPR000206">
    <property type="entry name" value="Ribosomal_bL12"/>
</dbReference>
<dbReference type="InterPro" id="IPR013823">
    <property type="entry name" value="Ribosomal_bL12_C"/>
</dbReference>
<dbReference type="InterPro" id="IPR014719">
    <property type="entry name" value="Ribosomal_bL12_C/ClpS-like"/>
</dbReference>
<dbReference type="InterPro" id="IPR008932">
    <property type="entry name" value="Ribosomal_bL12_oligo"/>
</dbReference>
<dbReference type="InterPro" id="IPR036235">
    <property type="entry name" value="Ribosomal_bL12_oligo_N_sf"/>
</dbReference>
<dbReference type="NCBIfam" id="TIGR00855">
    <property type="entry name" value="L12"/>
    <property type="match status" value="1"/>
</dbReference>
<dbReference type="PANTHER" id="PTHR45987">
    <property type="entry name" value="39S RIBOSOMAL PROTEIN L12"/>
    <property type="match status" value="1"/>
</dbReference>
<dbReference type="PANTHER" id="PTHR45987:SF4">
    <property type="entry name" value="LARGE RIBOSOMAL SUBUNIT PROTEIN BL12M"/>
    <property type="match status" value="1"/>
</dbReference>
<dbReference type="Pfam" id="PF00542">
    <property type="entry name" value="Ribosomal_L12"/>
    <property type="match status" value="1"/>
</dbReference>
<dbReference type="Pfam" id="PF16320">
    <property type="entry name" value="Ribosomal_L12_N"/>
    <property type="match status" value="1"/>
</dbReference>
<dbReference type="SUPFAM" id="SSF54736">
    <property type="entry name" value="ClpS-like"/>
    <property type="match status" value="1"/>
</dbReference>
<dbReference type="SUPFAM" id="SSF48300">
    <property type="entry name" value="Ribosomal protein L7/12, oligomerisation (N-terminal) domain"/>
    <property type="match status" value="1"/>
</dbReference>
<feature type="chain" id="PRO_0000243401" description="Large ribosomal subunit protein bL12">
    <location>
        <begin position="1"/>
        <end position="124"/>
    </location>
</feature>
<keyword id="KW-1185">Reference proteome</keyword>
<keyword id="KW-0687">Ribonucleoprotein</keyword>
<keyword id="KW-0689">Ribosomal protein</keyword>
<name>RL7_BURPS</name>
<sequence length="124" mass="12559">MAIAKEDILAAVEGMTVLELNELVKAFEEKFGVSAAAVAVAGPAAGGAAAAAEEKTEFTVVLAEAGSNKVAVIKAVREITGLGLKEAKDLVDGAPKPVKEGVDKASADEAKKKLEDAGAKVELK</sequence>
<proteinExistence type="inferred from homology"/>
<evidence type="ECO:0000255" key="1">
    <source>
        <dbReference type="HAMAP-Rule" id="MF_00368"/>
    </source>
</evidence>
<evidence type="ECO:0000305" key="2"/>
<protein>
    <recommendedName>
        <fullName evidence="1">Large ribosomal subunit protein bL12</fullName>
    </recommendedName>
    <alternativeName>
        <fullName evidence="2">50S ribosomal protein L7/L12</fullName>
    </alternativeName>
</protein>
<accession>Q63Q02</accession>
<comment type="function">
    <text evidence="1">Forms part of the ribosomal stalk which helps the ribosome interact with GTP-bound translation factors. Is thus essential for accurate translation.</text>
</comment>
<comment type="subunit">
    <text evidence="1">Homodimer. Part of the ribosomal stalk of the 50S ribosomal subunit. Forms a multimeric L10(L12)X complex, where L10 forms an elongated spine to which 2 to 4 L12 dimers bind in a sequential fashion. Binds GTP-bound translation factors.</text>
</comment>
<comment type="similarity">
    <text evidence="1">Belongs to the bacterial ribosomal protein bL12 family.</text>
</comment>
<comment type="sequence caution" evidence="2">
    <conflict type="erroneous initiation">
        <sequence resource="EMBL-CDS" id="CAH37233"/>
    </conflict>
</comment>